<name>FOLB_STRP6</name>
<comment type="function">
    <text evidence="1">Catalyzes the conversion of 7,8-dihydroneopterin to 6-hydroxymethyl-7,8-dihydropterin.</text>
</comment>
<comment type="catalytic activity">
    <reaction evidence="1">
        <text>7,8-dihydroneopterin = 6-hydroxymethyl-7,8-dihydropterin + glycolaldehyde</text>
        <dbReference type="Rhea" id="RHEA:10540"/>
        <dbReference type="ChEBI" id="CHEBI:17001"/>
        <dbReference type="ChEBI" id="CHEBI:17071"/>
        <dbReference type="ChEBI" id="CHEBI:44841"/>
        <dbReference type="EC" id="4.1.2.25"/>
    </reaction>
</comment>
<comment type="pathway">
    <text>Cofactor biosynthesis; tetrahydrofolate biosynthesis; 2-amino-4-hydroxy-6-hydroxymethyl-7,8-dihydropteridine diphosphate from 7,8-dihydroneopterin triphosphate: step 3/4.</text>
</comment>
<comment type="similarity">
    <text evidence="2">Belongs to the DHNA family.</text>
</comment>
<proteinExistence type="inferred from homology"/>
<evidence type="ECO:0000250" key="1">
    <source>
        <dbReference type="UniProtKB" id="P0AC16"/>
    </source>
</evidence>
<evidence type="ECO:0000305" key="2"/>
<dbReference type="EC" id="4.1.2.25"/>
<dbReference type="EMBL" id="CP000003">
    <property type="protein sequence ID" value="AAT86956.1"/>
    <property type="molecule type" value="Genomic_DNA"/>
</dbReference>
<dbReference type="RefSeq" id="WP_011184487.1">
    <property type="nucleotide sequence ID" value="NC_006086.1"/>
</dbReference>
<dbReference type="SMR" id="Q5XCA7"/>
<dbReference type="KEGG" id="spa:M6_Spy0821"/>
<dbReference type="HOGENOM" id="CLU_112632_1_3_9"/>
<dbReference type="UniPathway" id="UPA00077">
    <property type="reaction ID" value="UER00154"/>
</dbReference>
<dbReference type="Proteomes" id="UP000001167">
    <property type="component" value="Chromosome"/>
</dbReference>
<dbReference type="GO" id="GO:0005737">
    <property type="term" value="C:cytoplasm"/>
    <property type="evidence" value="ECO:0007669"/>
    <property type="project" value="TreeGrafter"/>
</dbReference>
<dbReference type="GO" id="GO:0004150">
    <property type="term" value="F:dihydroneopterin aldolase activity"/>
    <property type="evidence" value="ECO:0007669"/>
    <property type="project" value="UniProtKB-EC"/>
</dbReference>
<dbReference type="GO" id="GO:0046656">
    <property type="term" value="P:folic acid biosynthetic process"/>
    <property type="evidence" value="ECO:0007669"/>
    <property type="project" value="UniProtKB-KW"/>
</dbReference>
<dbReference type="GO" id="GO:0046654">
    <property type="term" value="P:tetrahydrofolate biosynthetic process"/>
    <property type="evidence" value="ECO:0007669"/>
    <property type="project" value="UniProtKB-UniPathway"/>
</dbReference>
<dbReference type="CDD" id="cd00534">
    <property type="entry name" value="DHNA_DHNTPE"/>
    <property type="match status" value="1"/>
</dbReference>
<dbReference type="FunFam" id="3.30.1130.10:FF:000003">
    <property type="entry name" value="7,8-dihydroneopterin aldolase"/>
    <property type="match status" value="1"/>
</dbReference>
<dbReference type="Gene3D" id="3.30.1130.10">
    <property type="match status" value="1"/>
</dbReference>
<dbReference type="InterPro" id="IPR006156">
    <property type="entry name" value="Dihydroneopterin_aldolase"/>
</dbReference>
<dbReference type="InterPro" id="IPR006157">
    <property type="entry name" value="FolB_dom"/>
</dbReference>
<dbReference type="InterPro" id="IPR043133">
    <property type="entry name" value="GTP-CH-I_C/QueF"/>
</dbReference>
<dbReference type="NCBIfam" id="TIGR00525">
    <property type="entry name" value="folB"/>
    <property type="match status" value="1"/>
</dbReference>
<dbReference type="NCBIfam" id="TIGR00526">
    <property type="entry name" value="folB_dom"/>
    <property type="match status" value="1"/>
</dbReference>
<dbReference type="PANTHER" id="PTHR42844">
    <property type="entry name" value="DIHYDRONEOPTERIN ALDOLASE 1-RELATED"/>
    <property type="match status" value="1"/>
</dbReference>
<dbReference type="PANTHER" id="PTHR42844:SF1">
    <property type="entry name" value="DIHYDRONEOPTERIN ALDOLASE 1-RELATED"/>
    <property type="match status" value="1"/>
</dbReference>
<dbReference type="Pfam" id="PF02152">
    <property type="entry name" value="FolB"/>
    <property type="match status" value="1"/>
</dbReference>
<dbReference type="SMART" id="SM00905">
    <property type="entry name" value="FolB"/>
    <property type="match status" value="1"/>
</dbReference>
<dbReference type="SUPFAM" id="SSF55620">
    <property type="entry name" value="Tetrahydrobiopterin biosynthesis enzymes-like"/>
    <property type="match status" value="1"/>
</dbReference>
<accession>Q5XCA7</accession>
<keyword id="KW-0289">Folate biosynthesis</keyword>
<keyword id="KW-0456">Lyase</keyword>
<protein>
    <recommendedName>
        <fullName>Dihydroneopterin aldolase</fullName>
        <shortName>DHNA</shortName>
        <ecNumber>4.1.2.25</ecNumber>
    </recommendedName>
    <alternativeName>
        <fullName>7,8-dihydroneopterin aldolase</fullName>
    </alternativeName>
</protein>
<reference key="1">
    <citation type="journal article" date="2004" name="J. Infect. Dis.">
        <title>Progress toward characterization of the group A Streptococcus metagenome: complete genome sequence of a macrolide-resistant serotype M6 strain.</title>
        <authorList>
            <person name="Banks D.J."/>
            <person name="Porcella S.F."/>
            <person name="Barbian K.D."/>
            <person name="Beres S.B."/>
            <person name="Philips L.E."/>
            <person name="Voyich J.M."/>
            <person name="DeLeo F.R."/>
            <person name="Martin J.M."/>
            <person name="Somerville G.A."/>
            <person name="Musser J.M."/>
        </authorList>
    </citation>
    <scope>NUCLEOTIDE SEQUENCE [LARGE SCALE GENOMIC DNA]</scope>
    <source>
        <strain>ATCC BAA-946 / MGAS10394</strain>
    </source>
</reference>
<gene>
    <name type="primary">folB</name>
    <name type="synonym">folQ</name>
    <name type="ordered locus">M6_Spy0821</name>
</gene>
<feature type="chain" id="PRO_0000168291" description="Dihydroneopterin aldolase">
    <location>
        <begin position="1"/>
        <end position="119"/>
    </location>
</feature>
<feature type="active site" description="Proton donor/acceptor" evidence="1">
    <location>
        <position position="99"/>
    </location>
</feature>
<feature type="binding site" evidence="1">
    <location>
        <position position="21"/>
    </location>
    <ligand>
        <name>substrate</name>
    </ligand>
</feature>
<feature type="binding site" evidence="1">
    <location>
        <position position="53"/>
    </location>
    <ligand>
        <name>substrate</name>
    </ligand>
</feature>
<feature type="binding site" evidence="1">
    <location>
        <begin position="72"/>
        <end position="73"/>
    </location>
    <ligand>
        <name>substrate</name>
    </ligand>
</feature>
<organism>
    <name type="scientific">Streptococcus pyogenes serotype M6 (strain ATCC BAA-946 / MGAS10394)</name>
    <dbReference type="NCBI Taxonomy" id="286636"/>
    <lineage>
        <taxon>Bacteria</taxon>
        <taxon>Bacillati</taxon>
        <taxon>Bacillota</taxon>
        <taxon>Bacilli</taxon>
        <taxon>Lactobacillales</taxon>
        <taxon>Streptococcaceae</taxon>
        <taxon>Streptococcus</taxon>
    </lineage>
</organism>
<sequence>MDKIVLESCRFYGYHGAFKEEQTLGQIFLVDLELSVDLQAASLSDQLTDTVHYGMVFDSVRQLVEGGKFILIERLAGAICEQLFNEFPPIEAIKVAIKKENPPIAGHYKAVGIELERQR</sequence>